<keyword id="KW-0244">Early protein</keyword>
<keyword id="KW-0880">Kelch repeat</keyword>
<keyword id="KW-1185">Reference proteome</keyword>
<keyword id="KW-0677">Repeat</keyword>
<name>VC02_VACCC</name>
<feature type="chain" id="PRO_0000119157" description="Kelch repeat protein C2">
    <location>
        <begin position="1"/>
        <end position="512"/>
    </location>
</feature>
<feature type="domain" description="BTB" evidence="1">
    <location>
        <begin position="2"/>
        <end position="67"/>
    </location>
</feature>
<feature type="repeat" description="Kelch 1">
    <location>
        <begin position="216"/>
        <end position="261"/>
    </location>
</feature>
<feature type="repeat" description="Kelch 2">
    <location>
        <begin position="262"/>
        <end position="307"/>
    </location>
</feature>
<feature type="repeat" description="Kelch 3">
    <location>
        <begin position="309"/>
        <end position="354"/>
    </location>
</feature>
<feature type="repeat" description="Kelch 4">
    <location>
        <begin position="356"/>
        <end position="403"/>
    </location>
</feature>
<feature type="repeat" description="Kelch 5">
    <location>
        <begin position="405"/>
        <end position="449"/>
    </location>
</feature>
<feature type="repeat" description="Kelch 6">
    <location>
        <begin position="452"/>
        <end position="498"/>
    </location>
</feature>
<accession>P21037</accession>
<organism>
    <name type="scientific">Vaccinia virus (strain Copenhagen)</name>
    <name type="common">VACV</name>
    <dbReference type="NCBI Taxonomy" id="10249"/>
    <lineage>
        <taxon>Viruses</taxon>
        <taxon>Varidnaviria</taxon>
        <taxon>Bamfordvirae</taxon>
        <taxon>Nucleocytoviricota</taxon>
        <taxon>Pokkesviricetes</taxon>
        <taxon>Chitovirales</taxon>
        <taxon>Poxviridae</taxon>
        <taxon>Chordopoxvirinae</taxon>
        <taxon>Orthopoxvirus</taxon>
        <taxon>Vaccinia virus</taxon>
    </lineage>
</organism>
<comment type="similarity">
    <text evidence="2">Belongs to the poxviruses Kelch family.</text>
</comment>
<protein>
    <recommendedName>
        <fullName>Kelch repeat protein C2</fullName>
    </recommendedName>
</protein>
<gene>
    <name type="ORF">C2L</name>
</gene>
<evidence type="ECO:0000255" key="1">
    <source>
        <dbReference type="PROSITE-ProRule" id="PRU00037"/>
    </source>
</evidence>
<evidence type="ECO:0000305" key="2"/>
<dbReference type="EMBL" id="M35027">
    <property type="protein sequence ID" value="AAA47999.1"/>
    <property type="molecule type" value="Genomic_DNA"/>
</dbReference>
<dbReference type="PIR" id="C42504">
    <property type="entry name" value="C42504"/>
</dbReference>
<dbReference type="SMR" id="P21037"/>
<dbReference type="Proteomes" id="UP000008269">
    <property type="component" value="Segment"/>
</dbReference>
<dbReference type="Gene3D" id="1.25.40.420">
    <property type="match status" value="1"/>
</dbReference>
<dbReference type="Gene3D" id="2.120.10.80">
    <property type="entry name" value="Kelch-type beta propeller"/>
    <property type="match status" value="1"/>
</dbReference>
<dbReference type="Gene3D" id="3.30.710.10">
    <property type="entry name" value="Potassium Channel Kv1.1, Chain A"/>
    <property type="match status" value="1"/>
</dbReference>
<dbReference type="InterPro" id="IPR011705">
    <property type="entry name" value="BACK"/>
</dbReference>
<dbReference type="InterPro" id="IPR000210">
    <property type="entry name" value="BTB/POZ_dom"/>
</dbReference>
<dbReference type="InterPro" id="IPR015915">
    <property type="entry name" value="Kelch-typ_b-propeller"/>
</dbReference>
<dbReference type="InterPro" id="IPR006652">
    <property type="entry name" value="Kelch_1"/>
</dbReference>
<dbReference type="InterPro" id="IPR011333">
    <property type="entry name" value="SKP1/BTB/POZ_sf"/>
</dbReference>
<dbReference type="PANTHER" id="PTHR24412">
    <property type="entry name" value="KELCH PROTEIN"/>
    <property type="match status" value="1"/>
</dbReference>
<dbReference type="PANTHER" id="PTHR24412:SF480">
    <property type="entry name" value="KELCH-LIKE PROTEIN 8"/>
    <property type="match status" value="1"/>
</dbReference>
<dbReference type="Pfam" id="PF07707">
    <property type="entry name" value="BACK"/>
    <property type="match status" value="1"/>
</dbReference>
<dbReference type="Pfam" id="PF00651">
    <property type="entry name" value="BTB"/>
    <property type="match status" value="1"/>
</dbReference>
<dbReference type="Pfam" id="PF01344">
    <property type="entry name" value="Kelch_1"/>
    <property type="match status" value="3"/>
</dbReference>
<dbReference type="SMART" id="SM00875">
    <property type="entry name" value="BACK"/>
    <property type="match status" value="1"/>
</dbReference>
<dbReference type="SMART" id="SM00225">
    <property type="entry name" value="BTB"/>
    <property type="match status" value="1"/>
</dbReference>
<dbReference type="SMART" id="SM00612">
    <property type="entry name" value="Kelch"/>
    <property type="match status" value="3"/>
</dbReference>
<dbReference type="SUPFAM" id="SSF117281">
    <property type="entry name" value="Kelch motif"/>
    <property type="match status" value="1"/>
</dbReference>
<dbReference type="SUPFAM" id="SSF54695">
    <property type="entry name" value="POZ domain"/>
    <property type="match status" value="1"/>
</dbReference>
<dbReference type="PROSITE" id="PS50097">
    <property type="entry name" value="BTB"/>
    <property type="match status" value="1"/>
</dbReference>
<reference key="1">
    <citation type="journal article" date="1990" name="Virology">
        <title>The complete DNA sequence of vaccinia virus.</title>
        <authorList>
            <person name="Goebel S.J."/>
            <person name="Johnson G.P."/>
            <person name="Perkus M.E."/>
            <person name="Davis S.W."/>
            <person name="Winslow J.P."/>
            <person name="Paoletti E."/>
        </authorList>
    </citation>
    <scope>NUCLEOTIDE SEQUENCE [LARGE SCALE GENOMIC DNA]</scope>
</reference>
<reference key="2">
    <citation type="journal article" date="1990" name="Virology">
        <title>Appendix to 'The complete DNA sequence of vaccinia virus'.</title>
        <authorList>
            <person name="Goebel S.J."/>
            <person name="Johnson G.P."/>
            <person name="Perkus M.E."/>
            <person name="Davis S.W."/>
            <person name="Winslow J.P."/>
            <person name="Paoletti E."/>
        </authorList>
    </citation>
    <scope>COMPLETE GENOME</scope>
</reference>
<sequence>MESVIFSINGEIIQVNKEIITASPYNFFKRIQDHHLKDEAIILNGINYHAFESLLDYMRWKKINITINNVEMILVAAVIIDVPPVVDLCVKTMIHNINSTNCIRMFNFSKRYGIKKLYNASMSEIINNITAVTSDPEFGKLSKDELTTILSHEDVNVNHEDVTAMILLKWIHKNPNDVDIINILHPKFMTNTMRNAISLLGLTISKSTKPVTRNGIKHNIVVIKNSDYISTITHYSPRTEYWTIVGNTDRQFYNANVLHNCLYIIGGMINNRHVYSVSRVDLETKKWKTVTNMSSLKSEVSTCVNDGKLYVIGGLEFSISTGVAEYLKHGTSKWIRLPNLITPRYSGASVFVNDDIYVMGGVYTTYEKYVVLNDVECFTKNRWIKKSPMPRHHSIVYAVEYDGDIYVITGITHETRNYLYKYIVKEDKWIELYMYFNHVGKMFVCSCGDYILIIADAKYEYYPKSNTWNLFDMSTRNIEYYDMFTKDETPKCNVTHKSLPSFLSNCEKQFLQ</sequence>
<proteinExistence type="inferred from homology"/>
<organismHost>
    <name type="scientific">Homo sapiens</name>
    <name type="common">Human</name>
    <dbReference type="NCBI Taxonomy" id="9606"/>
</organismHost>